<dbReference type="EMBL" id="U96091">
    <property type="protein sequence ID" value="AAB86979.1"/>
    <property type="molecule type" value="mRNA"/>
</dbReference>
<dbReference type="PIR" id="S27112">
    <property type="entry name" value="S27112"/>
</dbReference>
<dbReference type="RefSeq" id="NP_001075856.1">
    <property type="nucleotide sequence ID" value="NM_001082387.1"/>
</dbReference>
<dbReference type="RefSeq" id="XP_017196242.1">
    <property type="nucleotide sequence ID" value="XM_017340753.1"/>
</dbReference>
<dbReference type="RefSeq" id="XP_069926268.1">
    <property type="nucleotide sequence ID" value="XM_070070167.1"/>
</dbReference>
<dbReference type="PDB" id="3W5A">
    <property type="method" value="X-ray"/>
    <property type="resolution" value="3.01 A"/>
    <property type="chains" value="C=1-31"/>
</dbReference>
<dbReference type="PDB" id="4H1W">
    <property type="method" value="X-ray"/>
    <property type="resolution" value="3.10 A"/>
    <property type="chains" value="B=1-31"/>
</dbReference>
<dbReference type="PDBsum" id="3W5A"/>
<dbReference type="PDBsum" id="4H1W"/>
<dbReference type="BMRB" id="P42532"/>
<dbReference type="SMR" id="P42532"/>
<dbReference type="DIP" id="DIP-60212N"/>
<dbReference type="FunCoup" id="P42532">
    <property type="interactions" value="23"/>
</dbReference>
<dbReference type="IntAct" id="P42532">
    <property type="interactions" value="1"/>
</dbReference>
<dbReference type="STRING" id="9986.ENSOCUP00000010204"/>
<dbReference type="iPTMnet" id="P42532"/>
<dbReference type="SwissPalm" id="P42532"/>
<dbReference type="PaxDb" id="9986-ENSOCUP00000010204"/>
<dbReference type="Ensembl" id="ENSOCUT00000011874.2">
    <property type="protein sequence ID" value="ENSOCUP00000010204.2"/>
    <property type="gene ID" value="ENSOCUG00000011876.2"/>
</dbReference>
<dbReference type="GeneID" id="100009246"/>
<dbReference type="KEGG" id="ocu:100009246"/>
<dbReference type="CTD" id="6588"/>
<dbReference type="eggNOG" id="ENOG502TD27">
    <property type="taxonomic scope" value="Eukaryota"/>
</dbReference>
<dbReference type="GeneTree" id="ENSGT01040000240879"/>
<dbReference type="HOGENOM" id="CLU_221275_0_0_1"/>
<dbReference type="InParanoid" id="P42532"/>
<dbReference type="Proteomes" id="UP000001811">
    <property type="component" value="Chromosome 1"/>
</dbReference>
<dbReference type="Bgee" id="ENSOCUG00000011876">
    <property type="expression patterns" value="Expressed in skeletal muscle tissue and 14 other cell types or tissues"/>
</dbReference>
<dbReference type="GO" id="GO:0016529">
    <property type="term" value="C:sarcoplasmic reticulum"/>
    <property type="evidence" value="ECO:0000314"/>
    <property type="project" value="UniProtKB"/>
</dbReference>
<dbReference type="GO" id="GO:0033017">
    <property type="term" value="C:sarcoplasmic reticulum membrane"/>
    <property type="evidence" value="ECO:0000250"/>
    <property type="project" value="UniProtKB"/>
</dbReference>
<dbReference type="GO" id="GO:0051117">
    <property type="term" value="F:ATPase binding"/>
    <property type="evidence" value="ECO:0000314"/>
    <property type="project" value="BHF-UCL"/>
</dbReference>
<dbReference type="GO" id="GO:0004857">
    <property type="term" value="F:enzyme inhibitor activity"/>
    <property type="evidence" value="ECO:0000314"/>
    <property type="project" value="BHF-UCL"/>
</dbReference>
<dbReference type="GO" id="GO:1901895">
    <property type="term" value="P:negative regulation of ATPase-coupled calcium transmembrane transporter activity"/>
    <property type="evidence" value="ECO:0000250"/>
    <property type="project" value="UniProtKB"/>
</dbReference>
<dbReference type="GO" id="GO:0090281">
    <property type="term" value="P:negative regulation of calcium ion import"/>
    <property type="evidence" value="ECO:0000314"/>
    <property type="project" value="BHF-UCL"/>
</dbReference>
<dbReference type="GO" id="GO:1902081">
    <property type="term" value="P:negative regulation of calcium ion import into sarcoplasmic reticulum"/>
    <property type="evidence" value="ECO:0000314"/>
    <property type="project" value="BHF-UCL"/>
</dbReference>
<dbReference type="GO" id="GO:0043242">
    <property type="term" value="P:negative regulation of protein-containing complex disassembly"/>
    <property type="evidence" value="ECO:0000314"/>
    <property type="project" value="BHF-UCL"/>
</dbReference>
<dbReference type="GO" id="GO:1901881">
    <property type="term" value="P:positive regulation of protein depolymerization"/>
    <property type="evidence" value="ECO:0000314"/>
    <property type="project" value="BHF-UCL"/>
</dbReference>
<dbReference type="GO" id="GO:1901894">
    <property type="term" value="P:regulation of ATPase-coupled calcium transmembrane transporter activity"/>
    <property type="evidence" value="ECO:0000250"/>
    <property type="project" value="UniProtKB"/>
</dbReference>
<dbReference type="GO" id="GO:0051924">
    <property type="term" value="P:regulation of calcium ion transport"/>
    <property type="evidence" value="ECO:0000314"/>
    <property type="project" value="UniProtKB"/>
</dbReference>
<dbReference type="GO" id="GO:0010882">
    <property type="term" value="P:regulation of cardiac muscle contraction by calcium ion signaling"/>
    <property type="evidence" value="ECO:0000314"/>
    <property type="project" value="BHF-UCL"/>
</dbReference>
<dbReference type="GO" id="GO:1901077">
    <property type="term" value="P:regulation of relaxation of muscle"/>
    <property type="evidence" value="ECO:0000250"/>
    <property type="project" value="UniProtKB"/>
</dbReference>
<dbReference type="GO" id="GO:0070296">
    <property type="term" value="P:sarcoplasmic reticulum calcium ion transport"/>
    <property type="evidence" value="ECO:0000250"/>
    <property type="project" value="UniProtKB"/>
</dbReference>
<dbReference type="CDD" id="cd20253">
    <property type="entry name" value="Sarcolipin"/>
    <property type="match status" value="1"/>
</dbReference>
<dbReference type="InterPro" id="IPR008028">
    <property type="entry name" value="Sarcolipin"/>
</dbReference>
<dbReference type="Pfam" id="PF05366">
    <property type="entry name" value="Sarcolipin"/>
    <property type="match status" value="1"/>
</dbReference>
<gene>
    <name type="primary">SLN</name>
</gene>
<proteinExistence type="evidence at protein level"/>
<reference key="1">
    <citation type="submission" date="1997-04" db="EMBL/GenBank/DDBJ databases">
        <authorList>
            <person name="Odermatt A."/>
            <person name="Maclennan D.H."/>
        </authorList>
    </citation>
    <scope>NUCLEOTIDE SEQUENCE [MRNA]</scope>
</reference>
<reference key="2">
    <citation type="journal article" date="1992" name="Arch. Biochem. Biophys.">
        <title>Sarcolipin, the 'proteolipid' of skeletal muscle sarcoplasmic reticulum, is a unique, amphipathic, 31-residue peptide.</title>
        <authorList>
            <person name="Wawrzynow A."/>
            <person name="Theibert J.L."/>
            <person name="Murphy C."/>
            <person name="Jona I."/>
            <person name="Martonosi A."/>
            <person name="Collins J.H."/>
        </authorList>
    </citation>
    <scope>PROTEIN SEQUENCE</scope>
    <scope>SUBCELLULAR LOCATION</scope>
    <scope>TISSUE SPECIFICITY</scope>
</reference>
<reference key="3">
    <citation type="journal article" date="1980" name="Biochim. Biophys. Acta">
        <title>Purification and characterization of the proteolipid of rabbit sarcoplasmic reticulum.</title>
        <authorList>
            <person name="Ohnoki S."/>
            <person name="Martonosi A."/>
        </authorList>
    </citation>
    <scope>PROTEIN SEQUENCE OF 1-12 AND 28-31</scope>
</reference>
<reference key="4">
    <citation type="journal article" date="1998" name="J. Biol. Chem.">
        <title>Sarcolipin regulates the activity of SERCA1, the fast-twitch skeletal muscle sarcoplasmic reticulum Ca2+-ATPase.</title>
        <authorList>
            <person name="Odermatt A."/>
            <person name="Becker S."/>
            <person name="Khanna V.K."/>
            <person name="Kurzydlowski K."/>
            <person name="Leisner E."/>
            <person name="Pette D."/>
            <person name="MacLennan D.H."/>
        </authorList>
    </citation>
    <scope>FUNCTION</scope>
    <scope>SUBCELLULAR LOCATION</scope>
    <scope>TOPOLOGY</scope>
</reference>
<reference key="5">
    <citation type="journal article" date="2013" name="J. Biol. Chem.">
        <title>Sarco(endo)plasmic reticulum calcium ATPase (SERCA) inhibition by sarcolipin is encoded in its luminal tail.</title>
        <authorList>
            <person name="Gorski P.A."/>
            <person name="Glaves J.P."/>
            <person name="Vangheluwe P."/>
            <person name="Young H.S."/>
        </authorList>
    </citation>
    <scope>FUNCTION</scope>
    <scope>INTERACTION WITH ATP2A1</scope>
    <scope>SUBCELLULAR LOCATION</scope>
    <scope>TOPOLOGY</scope>
    <scope>IDENTIFICATION BY MASS SPECTROMETRY</scope>
    <scope>MUTAGENESIS OF VAL-26; ARG-27; SER-28; TYR-29; GLN-30 AND TYR-31</scope>
</reference>
<reference key="6">
    <citation type="journal article" date="2013" name="Nature">
        <title>Crystal structures of the calcium pump and sarcolipin in the Mg2+-bound E1 state.</title>
        <authorList>
            <person name="Toyoshima C."/>
            <person name="Iwasawa S."/>
            <person name="Ogawa H."/>
            <person name="Hirata A."/>
            <person name="Tsueda J."/>
            <person name="Inesi G."/>
        </authorList>
    </citation>
    <scope>X-RAY CRYSTALLOGRAPHY (3.0 ANGSTROMS) IN COMPLEX WITH ATP2A1</scope>
    <scope>INTERACTION WITH ATP2A1</scope>
</reference>
<reference key="7">
    <citation type="journal article" date="2013" name="Nature">
        <title>The sarcolipin-bound calcium pump stabilizes calcium sites exposed to the cytoplasm.</title>
        <authorList>
            <person name="Winther A.M."/>
            <person name="Bublitz M."/>
            <person name="Karlsen J.L."/>
            <person name="Moller J.V."/>
            <person name="Hansen J.B."/>
            <person name="Nissen P."/>
            <person name="Buch-Pedersen M.J."/>
        </authorList>
    </citation>
    <scope>X-RAY CRYSTALLOGRAPHY (3.1 ANGSTROMS) IN COMPLEX WITH ATP2A1</scope>
    <scope>INTERACTION WITH ATP2A1</scope>
</reference>
<keyword id="KW-0002">3D-structure</keyword>
<keyword id="KW-0903">Direct protein sequencing</keyword>
<keyword id="KW-0256">Endoplasmic reticulum</keyword>
<keyword id="KW-0472">Membrane</keyword>
<keyword id="KW-1185">Reference proteome</keyword>
<keyword id="KW-0703">Sarcoplasmic reticulum</keyword>
<keyword id="KW-0812">Transmembrane</keyword>
<keyword id="KW-1133">Transmembrane helix</keyword>
<comment type="function">
    <text evidence="2 5 8">Reversibly inhibits the activity of ATP2A1/SERCA1 and ATP2A2/SERCA2 in sarcoplasmic reticulum by decreasing the apparent affinity of the ATPase for Ca(2+) (PubMed:23362265, PubMed:9575189). Also inhibits the activity of ATP2A3/SERCA3 (By similarity). Modulates calcium re-uptake during muscle relaxation and plays an important role in calcium homeostasis in muscle (PubMed:23362265, PubMed:9575189). Required for muscle-based, non-shivering thermogenesis (By similarity).</text>
</comment>
<comment type="subunit">
    <text evidence="1 2 5 6 7">Homooligomer (By similarity). Can also form heterooligomers with other sarcoplasmic/endoplasmic reticulum calcium ATPase (SERCA) regulators ARLN, ERLN, PLN and STRIT1/DWORF (By similarity). Monomer (By similarity). Interacts with calcium ATPase ATP2A1/SERCA1 (PubMed:23362265, PubMed:23455422, PubMed:23455424). Interacts as a monomer with ATP2A2/SERCA2; the interaction decreases ATP2A2 Ca(2+) affinity (By similarity). Interacts with VMP1; VMP1 competes with PLN and SLN to prevent them from forming an inhibitory complex with ATP2A2 (By similarity).</text>
</comment>
<comment type="interaction">
    <interactant intactId="EBI-16039445">
        <id>P42532</id>
    </interactant>
    <interactant intactId="EBI-16039422">
        <id>B6CAM1</id>
    </interactant>
    <organismsDiffer>false</organismsDiffer>
    <experiments>2</experiments>
</comment>
<comment type="subcellular location">
    <subcellularLocation>
        <location evidence="4 5 8">Sarcoplasmic reticulum membrane</location>
        <topology evidence="3">Single-pass membrane protein</topology>
    </subcellularLocation>
    <subcellularLocation>
        <location evidence="5">Endoplasmic reticulum membrane</location>
        <topology evidence="3">Single-pass membrane protein</topology>
    </subcellularLocation>
</comment>
<comment type="tissue specificity">
    <text evidence="4">Skeletal muscle (at protein level).</text>
</comment>
<comment type="similarity">
    <text evidence="9">Belongs to the sarcolipin family.</text>
</comment>
<accession>P42532</accession>
<feature type="peptide" id="PRO_0000045900" description="Sarcolipin">
    <location>
        <begin position="1"/>
        <end position="31"/>
    </location>
</feature>
<feature type="topological domain" description="Cytoplasmic">
    <location>
        <begin position="1"/>
        <end position="7"/>
    </location>
</feature>
<feature type="transmembrane region" description="Helical">
    <location>
        <begin position="8"/>
        <end position="26"/>
    </location>
</feature>
<feature type="topological domain" description="Lumenal">
    <location>
        <begin position="27"/>
        <end position="31"/>
    </location>
</feature>
<feature type="mutagenesis site" description="Slightly reduces inhibition of ATP2A1-mediated calcium uptake." evidence="5">
    <original>V</original>
    <variation>A</variation>
    <location>
        <position position="26"/>
    </location>
</feature>
<feature type="mutagenesis site" description="Nearly abolishes inhibition of ATP2A1-mediated calcium uptake." evidence="5">
    <original>R</original>
    <variation>A</variation>
    <location>
        <position position="27"/>
    </location>
</feature>
<feature type="mutagenesis site" description="Reduces inhibition of ATP2A1-mediated calcium uptake." evidence="5">
    <original>S</original>
    <variation>A</variation>
    <location>
        <position position="28"/>
    </location>
</feature>
<feature type="mutagenesis site" description="Reduces inhibition of ATP2A1-mediated calcium uptake." evidence="5">
    <original>Y</original>
    <variation>A</variation>
    <location>
        <position position="29"/>
    </location>
</feature>
<feature type="mutagenesis site" description="Reduces inhibition of ATP2A1-mediated calcium uptake." evidence="5">
    <original>Q</original>
    <variation>A</variation>
    <location>
        <position position="30"/>
    </location>
</feature>
<feature type="mutagenesis site" description="Nearly abolishes inhibition of ATP2A1-mediated calcium uptake." evidence="5">
    <original>Y</original>
    <variation>A</variation>
    <location>
        <position position="31"/>
    </location>
</feature>
<feature type="helix" evidence="10">
    <location>
        <begin position="4"/>
        <end position="30"/>
    </location>
</feature>
<sequence length="31" mass="3774">MERSTRELCLNFTVVLITVILIWLLVRSYQY</sequence>
<evidence type="ECO:0000250" key="1">
    <source>
        <dbReference type="UniProtKB" id="O00631"/>
    </source>
</evidence>
<evidence type="ECO:0000250" key="2">
    <source>
        <dbReference type="UniProtKB" id="Q9CQD6"/>
    </source>
</evidence>
<evidence type="ECO:0000255" key="3"/>
<evidence type="ECO:0000269" key="4">
    <source>
    </source>
</evidence>
<evidence type="ECO:0000269" key="5">
    <source>
    </source>
</evidence>
<evidence type="ECO:0000269" key="6">
    <source>
    </source>
</evidence>
<evidence type="ECO:0000269" key="7">
    <source>
    </source>
</evidence>
<evidence type="ECO:0000269" key="8">
    <source>
    </source>
</evidence>
<evidence type="ECO:0000305" key="9"/>
<evidence type="ECO:0007829" key="10">
    <source>
        <dbReference type="PDB" id="3W5A"/>
    </source>
</evidence>
<protein>
    <recommendedName>
        <fullName>Sarcolipin</fullName>
    </recommendedName>
</protein>
<name>SARCO_RABIT</name>
<organism>
    <name type="scientific">Oryctolagus cuniculus</name>
    <name type="common">Rabbit</name>
    <dbReference type="NCBI Taxonomy" id="9986"/>
    <lineage>
        <taxon>Eukaryota</taxon>
        <taxon>Metazoa</taxon>
        <taxon>Chordata</taxon>
        <taxon>Craniata</taxon>
        <taxon>Vertebrata</taxon>
        <taxon>Euteleostomi</taxon>
        <taxon>Mammalia</taxon>
        <taxon>Eutheria</taxon>
        <taxon>Euarchontoglires</taxon>
        <taxon>Glires</taxon>
        <taxon>Lagomorpha</taxon>
        <taxon>Leporidae</taxon>
        <taxon>Oryctolagus</taxon>
    </lineage>
</organism>